<organism>
    <name type="scientific">Mus musculus</name>
    <name type="common">Mouse</name>
    <dbReference type="NCBI Taxonomy" id="10090"/>
    <lineage>
        <taxon>Eukaryota</taxon>
        <taxon>Metazoa</taxon>
        <taxon>Chordata</taxon>
        <taxon>Craniata</taxon>
        <taxon>Vertebrata</taxon>
        <taxon>Euteleostomi</taxon>
        <taxon>Mammalia</taxon>
        <taxon>Eutheria</taxon>
        <taxon>Euarchontoglires</taxon>
        <taxon>Glires</taxon>
        <taxon>Rodentia</taxon>
        <taxon>Myomorpha</taxon>
        <taxon>Muroidea</taxon>
        <taxon>Muridae</taxon>
        <taxon>Murinae</taxon>
        <taxon>Mus</taxon>
        <taxon>Mus</taxon>
    </lineage>
</organism>
<reference key="1">
    <citation type="journal article" date="2005" name="Science">
        <title>The transcriptional landscape of the mammalian genome.</title>
        <authorList>
            <person name="Carninci P."/>
            <person name="Kasukawa T."/>
            <person name="Katayama S."/>
            <person name="Gough J."/>
            <person name="Frith M.C."/>
            <person name="Maeda N."/>
            <person name="Oyama R."/>
            <person name="Ravasi T."/>
            <person name="Lenhard B."/>
            <person name="Wells C."/>
            <person name="Kodzius R."/>
            <person name="Shimokawa K."/>
            <person name="Bajic V.B."/>
            <person name="Brenner S.E."/>
            <person name="Batalov S."/>
            <person name="Forrest A.R."/>
            <person name="Zavolan M."/>
            <person name="Davis M.J."/>
            <person name="Wilming L.G."/>
            <person name="Aidinis V."/>
            <person name="Allen J.E."/>
            <person name="Ambesi-Impiombato A."/>
            <person name="Apweiler R."/>
            <person name="Aturaliya R.N."/>
            <person name="Bailey T.L."/>
            <person name="Bansal M."/>
            <person name="Baxter L."/>
            <person name="Beisel K.W."/>
            <person name="Bersano T."/>
            <person name="Bono H."/>
            <person name="Chalk A.M."/>
            <person name="Chiu K.P."/>
            <person name="Choudhary V."/>
            <person name="Christoffels A."/>
            <person name="Clutterbuck D.R."/>
            <person name="Crowe M.L."/>
            <person name="Dalla E."/>
            <person name="Dalrymple B.P."/>
            <person name="de Bono B."/>
            <person name="Della Gatta G."/>
            <person name="di Bernardo D."/>
            <person name="Down T."/>
            <person name="Engstrom P."/>
            <person name="Fagiolini M."/>
            <person name="Faulkner G."/>
            <person name="Fletcher C.F."/>
            <person name="Fukushima T."/>
            <person name="Furuno M."/>
            <person name="Futaki S."/>
            <person name="Gariboldi M."/>
            <person name="Georgii-Hemming P."/>
            <person name="Gingeras T.R."/>
            <person name="Gojobori T."/>
            <person name="Green R.E."/>
            <person name="Gustincich S."/>
            <person name="Harbers M."/>
            <person name="Hayashi Y."/>
            <person name="Hensch T.K."/>
            <person name="Hirokawa N."/>
            <person name="Hill D."/>
            <person name="Huminiecki L."/>
            <person name="Iacono M."/>
            <person name="Ikeo K."/>
            <person name="Iwama A."/>
            <person name="Ishikawa T."/>
            <person name="Jakt M."/>
            <person name="Kanapin A."/>
            <person name="Katoh M."/>
            <person name="Kawasawa Y."/>
            <person name="Kelso J."/>
            <person name="Kitamura H."/>
            <person name="Kitano H."/>
            <person name="Kollias G."/>
            <person name="Krishnan S.P."/>
            <person name="Kruger A."/>
            <person name="Kummerfeld S.K."/>
            <person name="Kurochkin I.V."/>
            <person name="Lareau L.F."/>
            <person name="Lazarevic D."/>
            <person name="Lipovich L."/>
            <person name="Liu J."/>
            <person name="Liuni S."/>
            <person name="McWilliam S."/>
            <person name="Madan Babu M."/>
            <person name="Madera M."/>
            <person name="Marchionni L."/>
            <person name="Matsuda H."/>
            <person name="Matsuzawa S."/>
            <person name="Miki H."/>
            <person name="Mignone F."/>
            <person name="Miyake S."/>
            <person name="Morris K."/>
            <person name="Mottagui-Tabar S."/>
            <person name="Mulder N."/>
            <person name="Nakano N."/>
            <person name="Nakauchi H."/>
            <person name="Ng P."/>
            <person name="Nilsson R."/>
            <person name="Nishiguchi S."/>
            <person name="Nishikawa S."/>
            <person name="Nori F."/>
            <person name="Ohara O."/>
            <person name="Okazaki Y."/>
            <person name="Orlando V."/>
            <person name="Pang K.C."/>
            <person name="Pavan W.J."/>
            <person name="Pavesi G."/>
            <person name="Pesole G."/>
            <person name="Petrovsky N."/>
            <person name="Piazza S."/>
            <person name="Reed J."/>
            <person name="Reid J.F."/>
            <person name="Ring B.Z."/>
            <person name="Ringwald M."/>
            <person name="Rost B."/>
            <person name="Ruan Y."/>
            <person name="Salzberg S.L."/>
            <person name="Sandelin A."/>
            <person name="Schneider C."/>
            <person name="Schoenbach C."/>
            <person name="Sekiguchi K."/>
            <person name="Semple C.A."/>
            <person name="Seno S."/>
            <person name="Sessa L."/>
            <person name="Sheng Y."/>
            <person name="Shibata Y."/>
            <person name="Shimada H."/>
            <person name="Shimada K."/>
            <person name="Silva D."/>
            <person name="Sinclair B."/>
            <person name="Sperling S."/>
            <person name="Stupka E."/>
            <person name="Sugiura K."/>
            <person name="Sultana R."/>
            <person name="Takenaka Y."/>
            <person name="Taki K."/>
            <person name="Tammoja K."/>
            <person name="Tan S.L."/>
            <person name="Tang S."/>
            <person name="Taylor M.S."/>
            <person name="Tegner J."/>
            <person name="Teichmann S.A."/>
            <person name="Ueda H.R."/>
            <person name="van Nimwegen E."/>
            <person name="Verardo R."/>
            <person name="Wei C.L."/>
            <person name="Yagi K."/>
            <person name="Yamanishi H."/>
            <person name="Zabarovsky E."/>
            <person name="Zhu S."/>
            <person name="Zimmer A."/>
            <person name="Hide W."/>
            <person name="Bult C."/>
            <person name="Grimmond S.M."/>
            <person name="Teasdale R.D."/>
            <person name="Liu E.T."/>
            <person name="Brusic V."/>
            <person name="Quackenbush J."/>
            <person name="Wahlestedt C."/>
            <person name="Mattick J.S."/>
            <person name="Hume D.A."/>
            <person name="Kai C."/>
            <person name="Sasaki D."/>
            <person name="Tomaru Y."/>
            <person name="Fukuda S."/>
            <person name="Kanamori-Katayama M."/>
            <person name="Suzuki M."/>
            <person name="Aoki J."/>
            <person name="Arakawa T."/>
            <person name="Iida J."/>
            <person name="Imamura K."/>
            <person name="Itoh M."/>
            <person name="Kato T."/>
            <person name="Kawaji H."/>
            <person name="Kawagashira N."/>
            <person name="Kawashima T."/>
            <person name="Kojima M."/>
            <person name="Kondo S."/>
            <person name="Konno H."/>
            <person name="Nakano K."/>
            <person name="Ninomiya N."/>
            <person name="Nishio T."/>
            <person name="Okada M."/>
            <person name="Plessy C."/>
            <person name="Shibata K."/>
            <person name="Shiraki T."/>
            <person name="Suzuki S."/>
            <person name="Tagami M."/>
            <person name="Waki K."/>
            <person name="Watahiki A."/>
            <person name="Okamura-Oho Y."/>
            <person name="Suzuki H."/>
            <person name="Kawai J."/>
            <person name="Hayashizaki Y."/>
        </authorList>
    </citation>
    <scope>NUCLEOTIDE SEQUENCE [LARGE SCALE MRNA]</scope>
    <source>
        <strain>C57BL/6J</strain>
        <tissue>Bone</tissue>
    </source>
</reference>
<reference key="2">
    <citation type="journal article" date="2004" name="Genome Res.">
        <title>The status, quality, and expansion of the NIH full-length cDNA project: the Mammalian Gene Collection (MGC).</title>
        <authorList>
            <consortium name="The MGC Project Team"/>
        </authorList>
    </citation>
    <scope>NUCLEOTIDE SEQUENCE [LARGE SCALE MRNA]</scope>
</reference>
<reference key="3">
    <citation type="journal article" date="2008" name="J. Leukoc. Biol.">
        <title>Identification of a new transmembrane adaptor protein that constitutively binds Grb2 in B cells.</title>
        <authorList>
            <person name="Liu Y."/>
            <person name="Zhang W."/>
        </authorList>
    </citation>
    <scope>FUNCTION</scope>
    <scope>TISSUE SPECIFICITY</scope>
    <scope>DISRUPTION PHENOTYPE</scope>
</reference>
<gene>
    <name type="primary">Gapt</name>
</gene>
<keyword id="KW-0075">B-cell activation</keyword>
<keyword id="KW-1003">Cell membrane</keyword>
<keyword id="KW-0472">Membrane</keyword>
<keyword id="KW-1185">Reference proteome</keyword>
<keyword id="KW-0812">Transmembrane</keyword>
<keyword id="KW-1133">Transmembrane helix</keyword>
<feature type="chain" id="PRO_0000271124" description="Protein GAPT">
    <location>
        <begin position="1"/>
        <end position="157"/>
    </location>
</feature>
<feature type="transmembrane region" description="Helical" evidence="2">
    <location>
        <begin position="10"/>
        <end position="30"/>
    </location>
</feature>
<feature type="region of interest" description="Disordered" evidence="3">
    <location>
        <begin position="117"/>
        <end position="157"/>
    </location>
</feature>
<feature type="compositionally biased region" description="Acidic residues" evidence="3">
    <location>
        <begin position="146"/>
        <end position="157"/>
    </location>
</feature>
<evidence type="ECO:0000250" key="1"/>
<evidence type="ECO:0000255" key="2"/>
<evidence type="ECO:0000256" key="3">
    <source>
        <dbReference type="SAM" id="MobiDB-lite"/>
    </source>
</evidence>
<evidence type="ECO:0000269" key="4">
    <source>
    </source>
</evidence>
<evidence type="ECO:0000305" key="5"/>
<accession>Q8CB93</accession>
<comment type="function">
    <text evidence="4">Negatively regulates B-cell proliferation following stimulation through the B-cell receptor. May play an important role in maintenance of marginal zone (MZ) B-cells.</text>
</comment>
<comment type="subunit">
    <text evidence="1">Interacts with GRB2.</text>
</comment>
<comment type="subcellular location">
    <subcellularLocation>
        <location evidence="1">Cell membrane</location>
        <topology evidence="1">Single-pass membrane protein</topology>
    </subcellularLocation>
</comment>
<comment type="tissue specificity">
    <text evidence="4">Expressed primarily in B220+ splenocytes and total bone marrow cells. Expressed at lower levels in mast cells and dendritic cells. Not detected in T-cells and macrophages (at protein level).</text>
</comment>
<comment type="disruption phenotype">
    <text evidence="4">Mice are normal in appearance, size and fertility. In aged mice, the number of MZ B-cells is increased, and serum concentrations of IgM, IgG2b, and IgG3 are elevated.</text>
</comment>
<comment type="similarity">
    <text evidence="5">Belongs to the GAPT family.</text>
</comment>
<sequence length="157" mass="17601">MLECFESSPVAVAVGVSLLVLLLLCGIGCAWHWNRRESTPFTLPKFMQRRSSRQKDVTKTVSSSAYVISPSMKASVESKGHKSTAKRNKMHGNYENVEVCPPCTEGTTEKALYENTQPSNLEEHVYGNQTDPLYYNFQKPSPPPPQDDDIYILPDCD</sequence>
<dbReference type="EMBL" id="AK036534">
    <property type="protein sequence ID" value="BAC29466.1"/>
    <property type="molecule type" value="mRNA"/>
</dbReference>
<dbReference type="EMBL" id="AK155882">
    <property type="protein sequence ID" value="BAE33480.1"/>
    <property type="molecule type" value="mRNA"/>
</dbReference>
<dbReference type="EMBL" id="BC116629">
    <property type="protein sequence ID" value="AAI16630.1"/>
    <property type="molecule type" value="mRNA"/>
</dbReference>
<dbReference type="EMBL" id="BC118005">
    <property type="protein sequence ID" value="AAI18006.1"/>
    <property type="molecule type" value="mRNA"/>
</dbReference>
<dbReference type="CCDS" id="CCDS26766.1"/>
<dbReference type="RefSeq" id="NP_808381.1">
    <property type="nucleotide sequence ID" value="NM_177713.3"/>
</dbReference>
<dbReference type="RefSeq" id="XP_006517713.1">
    <property type="nucleotide sequence ID" value="XM_006517650.3"/>
</dbReference>
<dbReference type="RefSeq" id="XP_006517714.1">
    <property type="nucleotide sequence ID" value="XM_006517651.5"/>
</dbReference>
<dbReference type="RefSeq" id="XP_006517715.1">
    <property type="nucleotide sequence ID" value="XM_006517652.3"/>
</dbReference>
<dbReference type="RefSeq" id="XP_036013938.1">
    <property type="nucleotide sequence ID" value="XM_036158045.1"/>
</dbReference>
<dbReference type="FunCoup" id="Q8CB93">
    <property type="interactions" value="160"/>
</dbReference>
<dbReference type="STRING" id="10090.ENSMUSP00000053775"/>
<dbReference type="iPTMnet" id="Q8CB93"/>
<dbReference type="PhosphoSitePlus" id="Q8CB93"/>
<dbReference type="PaxDb" id="10090-ENSMUSP00000053775"/>
<dbReference type="ProteomicsDB" id="271668"/>
<dbReference type="Antibodypedia" id="2638">
    <property type="antibodies" value="85 antibodies from 14 providers"/>
</dbReference>
<dbReference type="Ensembl" id="ENSMUST00000058806.7">
    <property type="protein sequence ID" value="ENSMUSP00000053775.6"/>
    <property type="gene ID" value="ENSMUSG00000046006.7"/>
</dbReference>
<dbReference type="Ensembl" id="ENSMUST00000224534.2">
    <property type="protein sequence ID" value="ENSMUSP00000153170.2"/>
    <property type="gene ID" value="ENSMUSG00000046006.7"/>
</dbReference>
<dbReference type="GeneID" id="238875"/>
<dbReference type="KEGG" id="mmu:238875"/>
<dbReference type="UCSC" id="uc007rvq.1">
    <property type="organism name" value="mouse"/>
</dbReference>
<dbReference type="AGR" id="MGI:3608341"/>
<dbReference type="CTD" id="202309"/>
<dbReference type="MGI" id="MGI:3608341">
    <property type="gene designation" value="Gapt"/>
</dbReference>
<dbReference type="VEuPathDB" id="HostDB:ENSMUSG00000046006"/>
<dbReference type="eggNOG" id="ENOG502TKNI">
    <property type="taxonomic scope" value="Eukaryota"/>
</dbReference>
<dbReference type="GeneTree" id="ENSGT00390000011255"/>
<dbReference type="HOGENOM" id="CLU_1668861_0_0_1"/>
<dbReference type="InParanoid" id="Q8CB93"/>
<dbReference type="OMA" id="WHWKHRN"/>
<dbReference type="OrthoDB" id="9832665at2759"/>
<dbReference type="PhylomeDB" id="Q8CB93"/>
<dbReference type="TreeFam" id="TF338585"/>
<dbReference type="BioGRID-ORCS" id="238875">
    <property type="hits" value="2 hits in 77 CRISPR screens"/>
</dbReference>
<dbReference type="PRO" id="PR:Q8CB93"/>
<dbReference type="Proteomes" id="UP000000589">
    <property type="component" value="Chromosome 13"/>
</dbReference>
<dbReference type="RNAct" id="Q8CB93">
    <property type="molecule type" value="protein"/>
</dbReference>
<dbReference type="Bgee" id="ENSMUSG00000046006">
    <property type="expression patterns" value="Expressed in granulocyte and 24 other cell types or tissues"/>
</dbReference>
<dbReference type="GO" id="GO:0005794">
    <property type="term" value="C:Golgi apparatus"/>
    <property type="evidence" value="ECO:0007669"/>
    <property type="project" value="Ensembl"/>
</dbReference>
<dbReference type="GO" id="GO:0005886">
    <property type="term" value="C:plasma membrane"/>
    <property type="evidence" value="ECO:0007669"/>
    <property type="project" value="UniProtKB-SubCell"/>
</dbReference>
<dbReference type="GO" id="GO:0001782">
    <property type="term" value="P:B cell homeostasis"/>
    <property type="evidence" value="ECO:0000315"/>
    <property type="project" value="MGI"/>
</dbReference>
<dbReference type="GO" id="GO:0002322">
    <property type="term" value="P:B cell proliferation involved in immune response"/>
    <property type="evidence" value="ECO:0000315"/>
    <property type="project" value="MGI"/>
</dbReference>
<dbReference type="InterPro" id="IPR021082">
    <property type="entry name" value="Protein_GAPT"/>
</dbReference>
<dbReference type="PANTHER" id="PTHR37350">
    <property type="entry name" value="PROTEIN GAPT"/>
    <property type="match status" value="1"/>
</dbReference>
<dbReference type="PANTHER" id="PTHR37350:SF1">
    <property type="entry name" value="PROTEIN GAPT"/>
    <property type="match status" value="1"/>
</dbReference>
<dbReference type="Pfam" id="PF11770">
    <property type="entry name" value="GAPT"/>
    <property type="match status" value="1"/>
</dbReference>
<dbReference type="PRINTS" id="PR02077">
    <property type="entry name" value="PROTEINGAPT"/>
</dbReference>
<name>GAPT_MOUSE</name>
<proteinExistence type="evidence at protein level"/>
<protein>
    <recommendedName>
        <fullName>Protein GAPT</fullName>
    </recommendedName>
    <alternativeName>
        <fullName>Growth factor receptor-bound protein 2-binding adapter protein, transmembrane</fullName>
    </alternativeName>
</protein>